<comment type="function">
    <text evidence="8 10">Plays a role in tight junctions and adherens junctions (PubMed:10026224). Acts as a positive regulator of RANKL-induced osteoclast differentiation, potentially via mediating downstream transcriptional activity (PubMed:22437732).</text>
</comment>
<comment type="subunit">
    <text evidence="3 8 9 10 11">Homodimer (By similarity). Interacts (via PDZ2 domain) with TJP1/ZO1 (via PDZ2 domain) (PubMed:10026224). Interacts with UBN1 (By similarity). Interacts with SCRIB (By similarity). Interacts with OCLN (PubMed:10026224). Interacts with SAFB in the nucleus (PubMed:12403786). Interacts with USP53 (via the C-terminal region) (PubMed:26609154). Interacts with claudins, including CLDN1, CLDN2, CLDN3, CLDN5 and CLDN7 (By similarity). Interacts with CLDN18 (PubMed:22437732). Interacts (via N-terminus) with CTNNA1 (PubMed:10026224).</text>
</comment>
<comment type="subcellular location">
    <subcellularLocation>
        <location evidence="8">Cell junction</location>
        <location evidence="8">Adherens junction</location>
    </subcellularLocation>
    <subcellularLocation>
        <location evidence="1">Cell membrane</location>
        <topology evidence="1">Peripheral membrane protein</topology>
        <orientation evidence="1">Cytoplasmic side</orientation>
    </subcellularLocation>
    <subcellularLocation>
        <location evidence="10">Nucleus</location>
    </subcellularLocation>
    <subcellularLocation>
        <location evidence="8 11">Cell junction</location>
        <location evidence="8 11">Tight junction</location>
    </subcellularLocation>
    <text evidence="1 2">Also nuclear under environmental stress conditions and in migratory endothelial cells and subconfluent epithelial cell cultures. Localizes to tight junctions during initial stages of their formation (By similarity).</text>
</comment>
<comment type="similarity">
    <text evidence="13">Belongs to the MAGUK family.</text>
</comment>
<keyword id="KW-0002">3D-structure</keyword>
<keyword id="KW-0965">Cell junction</keyword>
<keyword id="KW-1003">Cell membrane</keyword>
<keyword id="KW-0472">Membrane</keyword>
<keyword id="KW-0539">Nucleus</keyword>
<keyword id="KW-0597">Phosphoprotein</keyword>
<keyword id="KW-1185">Reference proteome</keyword>
<keyword id="KW-0677">Repeat</keyword>
<keyword id="KW-0728">SH3 domain</keyword>
<keyword id="KW-0796">Tight junction</keyword>
<dbReference type="EMBL" id="AF113005">
    <property type="protein sequence ID" value="AAD19964.1"/>
    <property type="molecule type" value="mRNA"/>
</dbReference>
<dbReference type="EMBL" id="BC034677">
    <property type="protein sequence ID" value="AAH34677.1"/>
    <property type="molecule type" value="mRNA"/>
</dbReference>
<dbReference type="EMBL" id="BC039924">
    <property type="protein sequence ID" value="AAH39924.1"/>
    <property type="molecule type" value="mRNA"/>
</dbReference>
<dbReference type="CCDS" id="CCDS89365.1"/>
<dbReference type="RefSeq" id="NP_001363297.1">
    <property type="nucleotide sequence ID" value="NM_001376368.1"/>
</dbReference>
<dbReference type="RefSeq" id="NP_035727.2">
    <property type="nucleotide sequence ID" value="NM_011597.5"/>
</dbReference>
<dbReference type="RefSeq" id="XP_006526971.1">
    <property type="nucleotide sequence ID" value="XM_006526908.3"/>
</dbReference>
<dbReference type="RefSeq" id="XP_011245521.1">
    <property type="nucleotide sequence ID" value="XM_011247219.2"/>
</dbReference>
<dbReference type="RefSeq" id="XP_036017405.1">
    <property type="nucleotide sequence ID" value="XM_036161512.1"/>
</dbReference>
<dbReference type="PDB" id="2CSJ">
    <property type="method" value="NMR"/>
    <property type="chains" value="A=1-104"/>
</dbReference>
<dbReference type="PDBsum" id="2CSJ"/>
<dbReference type="SMR" id="Q9Z0U1"/>
<dbReference type="BioGRID" id="204210">
    <property type="interactions" value="9"/>
</dbReference>
<dbReference type="FunCoup" id="Q9Z0U1">
    <property type="interactions" value="1475"/>
</dbReference>
<dbReference type="IntAct" id="Q9Z0U1">
    <property type="interactions" value="3"/>
</dbReference>
<dbReference type="MINT" id="Q9Z0U1"/>
<dbReference type="STRING" id="10090.ENSMUSP00000156728"/>
<dbReference type="ChEMBL" id="CHEMBL4879525"/>
<dbReference type="GlyGen" id="Q9Z0U1">
    <property type="glycosylation" value="8 sites, 3 N-linked glycans (3 sites), 1 O-linked glycan (5 sites)"/>
</dbReference>
<dbReference type="iPTMnet" id="Q9Z0U1"/>
<dbReference type="PhosphoSitePlus" id="Q9Z0U1"/>
<dbReference type="SwissPalm" id="Q9Z0U1"/>
<dbReference type="jPOST" id="Q9Z0U1"/>
<dbReference type="PaxDb" id="10090-ENSMUSP00000097154"/>
<dbReference type="PeptideAtlas" id="Q9Z0U1"/>
<dbReference type="ProteomicsDB" id="275312"/>
<dbReference type="Pumba" id="Q9Z0U1"/>
<dbReference type="DNASU" id="21873"/>
<dbReference type="Ensembl" id="ENSMUST00000099558.5">
    <property type="protein sequence ID" value="ENSMUSP00000097154.5"/>
    <property type="gene ID" value="ENSMUSG00000024812.12"/>
</dbReference>
<dbReference type="Ensembl" id="ENSMUST00000233658.3">
    <property type="protein sequence ID" value="ENSMUSP00000156728.3"/>
    <property type="gene ID" value="ENSMUSG00000024812.12"/>
</dbReference>
<dbReference type="GeneID" id="21873"/>
<dbReference type="KEGG" id="mmu:21873"/>
<dbReference type="UCSC" id="uc008ham.2">
    <property type="organism name" value="mouse"/>
</dbReference>
<dbReference type="AGR" id="MGI:1341872"/>
<dbReference type="CTD" id="9414"/>
<dbReference type="MGI" id="MGI:1341872">
    <property type="gene designation" value="Tjp2"/>
</dbReference>
<dbReference type="VEuPathDB" id="HostDB:ENSMUSG00000024812"/>
<dbReference type="eggNOG" id="KOG3580">
    <property type="taxonomic scope" value="Eukaryota"/>
</dbReference>
<dbReference type="GeneTree" id="ENSGT00940000158634"/>
<dbReference type="HOGENOM" id="CLU_006234_1_0_1"/>
<dbReference type="InParanoid" id="Q9Z0U1"/>
<dbReference type="OMA" id="RQGIKTM"/>
<dbReference type="OrthoDB" id="418634at2759"/>
<dbReference type="PhylomeDB" id="Q9Z0U1"/>
<dbReference type="TreeFam" id="TF315957"/>
<dbReference type="Reactome" id="R-MMU-2028269">
    <property type="pathway name" value="Signaling by Hippo"/>
</dbReference>
<dbReference type="Reactome" id="R-MMU-351906">
    <property type="pathway name" value="Apoptotic cleavage of cell adhesion proteins"/>
</dbReference>
<dbReference type="Reactome" id="R-MMU-8980692">
    <property type="pathway name" value="RHOA GTPase cycle"/>
</dbReference>
<dbReference type="Reactome" id="R-MMU-9013026">
    <property type="pathway name" value="RHOB GTPase cycle"/>
</dbReference>
<dbReference type="Reactome" id="R-MMU-9013106">
    <property type="pathway name" value="RHOC GTPase cycle"/>
</dbReference>
<dbReference type="BioGRID-ORCS" id="21873">
    <property type="hits" value="1 hit in 77 CRISPR screens"/>
</dbReference>
<dbReference type="CD-CODE" id="CE726F99">
    <property type="entry name" value="Postsynaptic density"/>
</dbReference>
<dbReference type="ChiTaRS" id="Tjp2">
    <property type="organism name" value="mouse"/>
</dbReference>
<dbReference type="EvolutionaryTrace" id="Q9Z0U1"/>
<dbReference type="PRO" id="PR:Q9Z0U1"/>
<dbReference type="Proteomes" id="UP000000589">
    <property type="component" value="Chromosome 19"/>
</dbReference>
<dbReference type="RNAct" id="Q9Z0U1">
    <property type="molecule type" value="protein"/>
</dbReference>
<dbReference type="Bgee" id="ENSMUSG00000024812">
    <property type="expression patterns" value="Expressed in ear vesicle and 257 other cell types or tissues"/>
</dbReference>
<dbReference type="ExpressionAtlas" id="Q9Z0U1">
    <property type="expression patterns" value="baseline and differential"/>
</dbReference>
<dbReference type="GO" id="GO:0005912">
    <property type="term" value="C:adherens junction"/>
    <property type="evidence" value="ECO:0007669"/>
    <property type="project" value="UniProtKB-SubCell"/>
</dbReference>
<dbReference type="GO" id="GO:0005923">
    <property type="term" value="C:bicellular tight junction"/>
    <property type="evidence" value="ECO:0000266"/>
    <property type="project" value="MGI"/>
</dbReference>
<dbReference type="GO" id="GO:0030054">
    <property type="term" value="C:cell junction"/>
    <property type="evidence" value="ECO:0000314"/>
    <property type="project" value="MGI"/>
</dbReference>
<dbReference type="GO" id="GO:0009986">
    <property type="term" value="C:cell surface"/>
    <property type="evidence" value="ECO:0000266"/>
    <property type="project" value="MGI"/>
</dbReference>
<dbReference type="GO" id="GO:0005911">
    <property type="term" value="C:cell-cell junction"/>
    <property type="evidence" value="ECO:0000314"/>
    <property type="project" value="ARUK-UCL"/>
</dbReference>
<dbReference type="GO" id="GO:0005921">
    <property type="term" value="C:gap junction"/>
    <property type="evidence" value="ECO:0000266"/>
    <property type="project" value="MGI"/>
</dbReference>
<dbReference type="GO" id="GO:0005634">
    <property type="term" value="C:nucleus"/>
    <property type="evidence" value="ECO:0000314"/>
    <property type="project" value="ARUK-UCL"/>
</dbReference>
<dbReference type="GO" id="GO:0005886">
    <property type="term" value="C:plasma membrane"/>
    <property type="evidence" value="ECO:0000314"/>
    <property type="project" value="MGI"/>
</dbReference>
<dbReference type="GO" id="GO:0070160">
    <property type="term" value="C:tight junction"/>
    <property type="evidence" value="ECO:0000314"/>
    <property type="project" value="MGI"/>
</dbReference>
<dbReference type="GO" id="GO:2001205">
    <property type="term" value="P:negative regulation of osteoclast development"/>
    <property type="evidence" value="ECO:0000315"/>
    <property type="project" value="MGI"/>
</dbReference>
<dbReference type="GO" id="GO:0010804">
    <property type="term" value="P:negative regulation of tumor necrosis factor-mediated signaling pathway"/>
    <property type="evidence" value="ECO:0000315"/>
    <property type="project" value="MGI"/>
</dbReference>
<dbReference type="CDD" id="cd06727">
    <property type="entry name" value="PDZ1_ZO1-like"/>
    <property type="match status" value="1"/>
</dbReference>
<dbReference type="CDD" id="cd06728">
    <property type="entry name" value="PDZ2_ZO1-like_ds"/>
    <property type="match status" value="1"/>
</dbReference>
<dbReference type="CDD" id="cd06729">
    <property type="entry name" value="PDZ3_ZO1-like_domain"/>
    <property type="match status" value="1"/>
</dbReference>
<dbReference type="CDD" id="cd12027">
    <property type="entry name" value="SH3_ZO-2"/>
    <property type="match status" value="1"/>
</dbReference>
<dbReference type="FunFam" id="2.30.42.10:FF:000009">
    <property type="entry name" value="Putative tight junction protein ZO-1"/>
    <property type="match status" value="1"/>
</dbReference>
<dbReference type="FunFam" id="2.30.42.10:FF:000013">
    <property type="entry name" value="Putative tight junction protein ZO-1"/>
    <property type="match status" value="1"/>
</dbReference>
<dbReference type="FunFam" id="3.40.50.300:FF:000110">
    <property type="entry name" value="tight junction protein ZO-1 isoform X1"/>
    <property type="match status" value="1"/>
</dbReference>
<dbReference type="FunFam" id="2.30.42.10:FF:000075">
    <property type="entry name" value="Tight junction protein ZO-2 isoform 2"/>
    <property type="match status" value="1"/>
</dbReference>
<dbReference type="Gene3D" id="2.30.42.10">
    <property type="match status" value="3"/>
</dbReference>
<dbReference type="Gene3D" id="3.40.50.300">
    <property type="entry name" value="P-loop containing nucleotide triphosphate hydrolases"/>
    <property type="match status" value="1"/>
</dbReference>
<dbReference type="Gene3D" id="2.30.30.40">
    <property type="entry name" value="SH3 Domains"/>
    <property type="match status" value="1"/>
</dbReference>
<dbReference type="InterPro" id="IPR008145">
    <property type="entry name" value="GK/Ca_channel_bsu"/>
</dbReference>
<dbReference type="InterPro" id="IPR008144">
    <property type="entry name" value="Guanylate_kin-like_dom"/>
</dbReference>
<dbReference type="InterPro" id="IPR027417">
    <property type="entry name" value="P-loop_NTPase"/>
</dbReference>
<dbReference type="InterPro" id="IPR001478">
    <property type="entry name" value="PDZ"/>
</dbReference>
<dbReference type="InterPro" id="IPR036034">
    <property type="entry name" value="PDZ_sf"/>
</dbReference>
<dbReference type="InterPro" id="IPR036028">
    <property type="entry name" value="SH3-like_dom_sf"/>
</dbReference>
<dbReference type="InterPro" id="IPR001452">
    <property type="entry name" value="SH3_domain"/>
</dbReference>
<dbReference type="InterPro" id="IPR005417">
    <property type="entry name" value="ZO"/>
</dbReference>
<dbReference type="InterPro" id="IPR005419">
    <property type="entry name" value="ZO-2"/>
</dbReference>
<dbReference type="InterPro" id="IPR035598">
    <property type="entry name" value="ZO-2_SH3"/>
</dbReference>
<dbReference type="PANTHER" id="PTHR13865">
    <property type="entry name" value="TIGHT JUNCTION PROTEIN"/>
    <property type="match status" value="1"/>
</dbReference>
<dbReference type="PANTHER" id="PTHR13865:SF26">
    <property type="entry name" value="TIGHT JUNCTION PROTEIN ZO-2"/>
    <property type="match status" value="1"/>
</dbReference>
<dbReference type="Pfam" id="PF00625">
    <property type="entry name" value="Guanylate_kin"/>
    <property type="match status" value="1"/>
</dbReference>
<dbReference type="Pfam" id="PF00595">
    <property type="entry name" value="PDZ"/>
    <property type="match status" value="3"/>
</dbReference>
<dbReference type="Pfam" id="PF07653">
    <property type="entry name" value="SH3_2"/>
    <property type="match status" value="1"/>
</dbReference>
<dbReference type="PRINTS" id="PR01597">
    <property type="entry name" value="ZONOCCLUDNS"/>
</dbReference>
<dbReference type="PRINTS" id="PR01599">
    <property type="entry name" value="ZONOCCLUDNS2"/>
</dbReference>
<dbReference type="SMART" id="SM00072">
    <property type="entry name" value="GuKc"/>
    <property type="match status" value="1"/>
</dbReference>
<dbReference type="SMART" id="SM00228">
    <property type="entry name" value="PDZ"/>
    <property type="match status" value="3"/>
</dbReference>
<dbReference type="SUPFAM" id="SSF52540">
    <property type="entry name" value="P-loop containing nucleoside triphosphate hydrolases"/>
    <property type="match status" value="1"/>
</dbReference>
<dbReference type="SUPFAM" id="SSF50156">
    <property type="entry name" value="PDZ domain-like"/>
    <property type="match status" value="3"/>
</dbReference>
<dbReference type="SUPFAM" id="SSF50044">
    <property type="entry name" value="SH3-domain"/>
    <property type="match status" value="1"/>
</dbReference>
<dbReference type="PROSITE" id="PS50052">
    <property type="entry name" value="GUANYLATE_KINASE_2"/>
    <property type="match status" value="1"/>
</dbReference>
<dbReference type="PROSITE" id="PS50106">
    <property type="entry name" value="PDZ"/>
    <property type="match status" value="3"/>
</dbReference>
<dbReference type="PROSITE" id="PS50002">
    <property type="entry name" value="SH3"/>
    <property type="match status" value="1"/>
</dbReference>
<feature type="chain" id="PRO_0000094544" description="Tight junction protein 2">
    <location>
        <begin position="1"/>
        <end position="1167"/>
    </location>
</feature>
<feature type="domain" description="PDZ 1" evidence="5">
    <location>
        <begin position="10"/>
        <end position="97"/>
    </location>
</feature>
<feature type="domain" description="PDZ 2" evidence="5">
    <location>
        <begin position="287"/>
        <end position="365"/>
    </location>
</feature>
<feature type="domain" description="PDZ 3" evidence="5">
    <location>
        <begin position="489"/>
        <end position="570"/>
    </location>
</feature>
<feature type="domain" description="SH3" evidence="6">
    <location>
        <begin position="584"/>
        <end position="649"/>
    </location>
</feature>
<feature type="domain" description="Guanylate kinase-like" evidence="4">
    <location>
        <begin position="660"/>
        <end position="858"/>
    </location>
</feature>
<feature type="region of interest" description="Disordered" evidence="7">
    <location>
        <begin position="129"/>
        <end position="195"/>
    </location>
</feature>
<feature type="region of interest" description="Disordered" evidence="7">
    <location>
        <begin position="225"/>
        <end position="286"/>
    </location>
</feature>
<feature type="region of interest" description="Disordered" evidence="7">
    <location>
        <begin position="381"/>
        <end position="485"/>
    </location>
</feature>
<feature type="region of interest" description="Disordered" evidence="7">
    <location>
        <begin position="904"/>
        <end position="1055"/>
    </location>
</feature>
<feature type="region of interest" description="Disordered" evidence="7">
    <location>
        <begin position="1095"/>
        <end position="1167"/>
    </location>
</feature>
<feature type="region of interest" description="Interaction with SCRIB" evidence="1">
    <location>
        <begin position="1165"/>
        <end position="1167"/>
    </location>
</feature>
<feature type="compositionally biased region" description="Basic and acidic residues" evidence="7">
    <location>
        <begin position="242"/>
        <end position="262"/>
    </location>
</feature>
<feature type="compositionally biased region" description="Basic and acidic residues" evidence="7">
    <location>
        <begin position="395"/>
        <end position="426"/>
    </location>
</feature>
<feature type="compositionally biased region" description="Basic and acidic residues" evidence="7">
    <location>
        <begin position="938"/>
        <end position="949"/>
    </location>
</feature>
<feature type="compositionally biased region" description="Basic and acidic residues" evidence="7">
    <location>
        <begin position="976"/>
        <end position="990"/>
    </location>
</feature>
<feature type="compositionally biased region" description="Acidic residues" evidence="7">
    <location>
        <begin position="1037"/>
        <end position="1049"/>
    </location>
</feature>
<feature type="modified residue" description="Phosphoserine" evidence="16 18 20 21">
    <location>
        <position position="107"/>
    </location>
</feature>
<feature type="modified residue" description="Phosphoserine" evidence="3">
    <location>
        <position position="127"/>
    </location>
</feature>
<feature type="modified residue" description="Phosphoserine" evidence="3">
    <location>
        <position position="130"/>
    </location>
</feature>
<feature type="modified residue" description="Phosphoserine" evidence="21">
    <location>
        <position position="140"/>
    </location>
</feature>
<feature type="modified residue" description="Phosphoserine" evidence="3">
    <location>
        <position position="145"/>
    </location>
</feature>
<feature type="modified residue" description="Phosphoserine" evidence="3">
    <location>
        <position position="147"/>
    </location>
</feature>
<feature type="modified residue" description="Phosphoserine" evidence="3">
    <location>
        <position position="173"/>
    </location>
</feature>
<feature type="modified residue" description="Phosphoserine" evidence="3">
    <location>
        <position position="194"/>
    </location>
</feature>
<feature type="modified residue" description="Phosphoserine" evidence="3">
    <location>
        <position position="205"/>
    </location>
</feature>
<feature type="modified residue" description="Phosphoserine" evidence="21">
    <location>
        <position position="239"/>
    </location>
</feature>
<feature type="modified residue" description="Phosphoserine" evidence="3">
    <location>
        <position position="305"/>
    </location>
</feature>
<feature type="modified residue" description="Phosphoserine" evidence="21">
    <location>
        <position position="378"/>
    </location>
</feature>
<feature type="modified residue" description="Phosphoserine" evidence="21">
    <location>
        <position position="380"/>
    </location>
</feature>
<feature type="modified residue" description="Phosphoserine" evidence="3">
    <location>
        <position position="386"/>
    </location>
</feature>
<feature type="modified residue" description="Phosphoserine" evidence="3">
    <location>
        <position position="395"/>
    </location>
</feature>
<feature type="modified residue" description="Phosphoserine" evidence="3">
    <location>
        <position position="404"/>
    </location>
</feature>
<feature type="modified residue" description="Phosphoserine" evidence="3">
    <location>
        <position position="410"/>
    </location>
</feature>
<feature type="modified residue" description="Phosphoserine" evidence="3">
    <location>
        <position position="411"/>
    </location>
</feature>
<feature type="modified residue" description="Phosphothreonine" evidence="3">
    <location>
        <position position="435"/>
    </location>
</feature>
<feature type="modified residue" description="Phosphoserine" evidence="21">
    <location>
        <position position="479"/>
    </location>
</feature>
<feature type="modified residue" description="Phosphotyrosine" evidence="15">
    <location>
        <position position="554"/>
    </location>
</feature>
<feature type="modified residue" description="Phosphoserine" evidence="21">
    <location>
        <position position="684"/>
    </location>
</feature>
<feature type="modified residue" description="Phosphoserine" evidence="21">
    <location>
        <position position="884"/>
    </location>
</feature>
<feature type="modified residue" description="Phosphothreonine" evidence="21">
    <location>
        <position position="887"/>
    </location>
</feature>
<feature type="modified residue" description="Phosphoserine" evidence="21">
    <location>
        <position position="895"/>
    </location>
</feature>
<feature type="modified residue" description="Phosphoserine" evidence="3">
    <location>
        <position position="902"/>
    </location>
</feature>
<feature type="modified residue" description="Phosphothreonine" evidence="3">
    <location>
        <position position="907"/>
    </location>
</feature>
<feature type="modified residue" description="Phosphothreonine" evidence="3">
    <location>
        <position position="915"/>
    </location>
</feature>
<feature type="modified residue" description="Phosphoserine" evidence="3">
    <location>
        <position position="948"/>
    </location>
</feature>
<feature type="modified residue" description="Phosphoserine" evidence="3">
    <location>
        <position position="960"/>
    </location>
</feature>
<feature type="modified residue" description="Phosphoserine" evidence="19">
    <location>
        <position position="968"/>
    </location>
</feature>
<feature type="modified residue" description="Phosphoserine" evidence="21">
    <location>
        <position position="988"/>
    </location>
</feature>
<feature type="modified residue" description="Phosphoserine" evidence="3">
    <location>
        <position position="1044"/>
    </location>
</feature>
<feature type="modified residue" description="Phosphotyrosine" evidence="19">
    <location>
        <position position="1095"/>
    </location>
</feature>
<feature type="modified residue" description="Phosphoserine" evidence="3">
    <location>
        <position position="1124"/>
    </location>
</feature>
<feature type="modified residue" description="Phosphoserine" evidence="17 21">
    <location>
        <position position="1136"/>
    </location>
</feature>
<feature type="sequence conflict" description="In Ref. 1; AAD19964." evidence="13" ref="1">
    <original>Q</original>
    <variation>L</variation>
    <location>
        <position position="100"/>
    </location>
</feature>
<feature type="sequence conflict" description="In Ref. 1; AAD19964." evidence="13" ref="1">
    <original>QGS</original>
    <variation>LGC</variation>
    <location>
        <begin position="105"/>
        <end position="107"/>
    </location>
</feature>
<feature type="sequence conflict" description="In Ref. 1; AAD19964." evidence="13" ref="1">
    <original>SH</original>
    <variation>CL</variation>
    <location>
        <begin position="111"/>
        <end position="112"/>
    </location>
</feature>
<feature type="sequence conflict" description="In Ref. 1; AAD19964." evidence="13" ref="1">
    <original>R</original>
    <variation>G</variation>
    <location>
        <position position="156"/>
    </location>
</feature>
<feature type="sequence conflict" description="In Ref. 1; AAD19964." evidence="13" ref="1">
    <original>K</original>
    <variation>Q</variation>
    <location>
        <position position="292"/>
    </location>
</feature>
<feature type="sequence conflict" description="In Ref. 1; AAD19964." evidence="13" ref="1">
    <original>S</original>
    <variation>R</variation>
    <location>
        <position position="378"/>
    </location>
</feature>
<feature type="sequence conflict" description="In Ref. 1; AAD19964." evidence="13" ref="1">
    <original>A</original>
    <variation>P</variation>
    <location>
        <position position="447"/>
    </location>
</feature>
<feature type="sequence conflict" description="In Ref. 1; AAD19964." evidence="13" ref="1">
    <original>S</original>
    <variation>T</variation>
    <location>
        <position position="454"/>
    </location>
</feature>
<feature type="sequence conflict" description="In Ref. 1; AAD19964." evidence="13" ref="1">
    <original>T</original>
    <variation>A</variation>
    <location>
        <position position="470"/>
    </location>
</feature>
<feature type="sequence conflict" description="In Ref. 1; AAD19964." evidence="13" ref="1">
    <original>A</original>
    <variation>P</variation>
    <location>
        <position position="506"/>
    </location>
</feature>
<feature type="sequence conflict" description="In Ref. 1; AAD19964." evidence="13" ref="1">
    <original>E</original>
    <variation>D</variation>
    <location>
        <position position="633"/>
    </location>
</feature>
<feature type="sequence conflict" description="In Ref. 1; AAD19964." evidence="13" ref="1">
    <original>A</original>
    <variation>D</variation>
    <location>
        <position position="649"/>
    </location>
</feature>
<feature type="sequence conflict" description="In Ref. 1; AAD19964." evidence="13" ref="1">
    <original>D</original>
    <variation>V</variation>
    <location>
        <position position="664"/>
    </location>
</feature>
<feature type="sequence conflict" description="In Ref. 1; AAD19964." evidence="13" ref="1">
    <original>R</original>
    <variation>W</variation>
    <location>
        <position position="667"/>
    </location>
</feature>
<feature type="sequence conflict" description="In Ref. 1; AAD19964." evidence="13" ref="1">
    <original>G</original>
    <variation>R</variation>
    <location>
        <position position="670"/>
    </location>
</feature>
<feature type="sequence conflict" description="In Ref. 1; AAD19964." evidence="13" ref="1">
    <original>S</original>
    <variation>R</variation>
    <location>
        <position position="674"/>
    </location>
</feature>
<feature type="sequence conflict" description="In Ref. 1; AAD19964." evidence="13" ref="1">
    <original>V</original>
    <variation>D</variation>
    <location>
        <position position="677"/>
    </location>
</feature>
<feature type="sequence conflict" description="In Ref. 1; AAD19964." evidence="13" ref="1">
    <original>N</original>
    <variation>T</variation>
    <location>
        <position position="680"/>
    </location>
</feature>
<feature type="sequence conflict" description="In Ref. 1; AAD19964." evidence="13" ref="1">
    <original>AA</original>
    <variation>RS</variation>
    <location>
        <begin position="690"/>
        <end position="691"/>
    </location>
</feature>
<feature type="sequence conflict" description="In Ref. 1; AAD19964." evidence="13" ref="1">
    <original>T</original>
    <variation>N</variation>
    <location>
        <position position="731"/>
    </location>
</feature>
<feature type="sequence conflict" description="In Ref. 1; AAD19964." evidence="13" ref="1">
    <original>M</original>
    <variation>I</variation>
    <location>
        <position position="1035"/>
    </location>
</feature>
<feature type="sequence conflict" description="In Ref. 1; AAD19964." evidence="13" ref="1">
    <original>S</original>
    <variation>T</variation>
    <location>
        <position position="1038"/>
    </location>
</feature>
<feature type="sequence conflict" description="In Ref. 1; AAD19964." evidence="13" ref="1">
    <original>A</original>
    <variation>P</variation>
    <location>
        <position position="1069"/>
    </location>
</feature>
<feature type="strand" evidence="22">
    <location>
        <begin position="4"/>
        <end position="14"/>
    </location>
</feature>
<feature type="strand" evidence="22">
    <location>
        <begin position="17"/>
        <end position="19"/>
    </location>
</feature>
<feature type="strand" evidence="22">
    <location>
        <begin position="23"/>
        <end position="26"/>
    </location>
</feature>
<feature type="strand" evidence="22">
    <location>
        <begin position="42"/>
        <end position="46"/>
    </location>
</feature>
<feature type="helix" evidence="22">
    <location>
        <begin position="52"/>
        <end position="55"/>
    </location>
</feature>
<feature type="strand" evidence="22">
    <location>
        <begin position="61"/>
        <end position="67"/>
    </location>
</feature>
<feature type="helix" evidence="22">
    <location>
        <begin position="75"/>
        <end position="84"/>
    </location>
</feature>
<feature type="strand" evidence="22">
    <location>
        <begin position="87"/>
        <end position="98"/>
    </location>
</feature>
<organism>
    <name type="scientific">Mus musculus</name>
    <name type="common">Mouse</name>
    <dbReference type="NCBI Taxonomy" id="10090"/>
    <lineage>
        <taxon>Eukaryota</taxon>
        <taxon>Metazoa</taxon>
        <taxon>Chordata</taxon>
        <taxon>Craniata</taxon>
        <taxon>Vertebrata</taxon>
        <taxon>Euteleostomi</taxon>
        <taxon>Mammalia</taxon>
        <taxon>Eutheria</taxon>
        <taxon>Euarchontoglires</taxon>
        <taxon>Glires</taxon>
        <taxon>Rodentia</taxon>
        <taxon>Myomorpha</taxon>
        <taxon>Muroidea</taxon>
        <taxon>Muridae</taxon>
        <taxon>Murinae</taxon>
        <taxon>Mus</taxon>
        <taxon>Mus</taxon>
    </lineage>
</organism>
<protein>
    <recommendedName>
        <fullName evidence="14">Tight junction protein 2</fullName>
    </recommendedName>
    <alternativeName>
        <fullName evidence="12">Tight junction protein ZO-2</fullName>
    </alternativeName>
    <alternativeName>
        <fullName>Zona occludens protein 2</fullName>
    </alternativeName>
    <alternativeName>
        <fullName>Zonula occludens protein 2</fullName>
    </alternativeName>
</protein>
<sequence length="1167" mass="131280">MEEVIWEQYTVTLQKDSKRGFGIAVSGGRDNPHFENGETSIVISDVLPGGPADGLLQENDRVVMVNGTPMEDVLHSFAVQQLRKSGKIAAIVVKRPRKVQVAPLQGSPPLSHDDRGFEVIEEFDGRSFRSGYSERSRHSSHDMLSHSWEGNRERGRPHQRTQSRERERSRGRSLERGLDQEDYGRSRERSRGRSLERGLDRDFVSRDHSRGRSIDRDYDRDYERSYHEAYEPDYGGGYSPSYDRRAHPETRYERSRSREHLRSRSPSPESRSRHEHKGQHDPDRPIGVLLTKSKANEEYGLRLGSQIFIKEMTRTGLATKDGNLHEGDIILKINGTVTENMSLTDARKLIEKSRGKLQLVVLRDSKQTLINIPALNDSDSEVEDISEIESNRSFSPEERRQQYSDQDYHSSTEKLKERPSSREETSGRLSRMGATPTPFKSTGDITAAGVTEASREPRYQEEGPVPQPRTAPRVFLRPSPEDEAIYGPNTKMVRFKKGDSVGLRLAGGNDVGIFVAGIQEGTSAEQEGLQEGDQILKVNTQDFRGLVREDAVLYLLEIPKGETVTILAQSRADVYRDILACGRGDSFFIRSHFECEKETPQSLAFTRGEVFRVVDTLYDGKLGHWLAVRIGNELEKGLIPNKSRAEQMASVQNAQRENAGDRADFWRMRGQRSSGGVKKNLRKSREDLAAAVSVSTKFPAYEKVLLREAGFKRPVVLFGPIADIAMERLATELPDLFQTAKTEPKDAGSEKSSGVVRLNTVRQIIEQDKHALLDVTPKAVDLLNYTQWFPIVIFFNPDSRQGVKTIRQRLSPTSNKSSRKLFDQANKLKKTCSHLFTATINVNSANDGWFGSLKDSIQQQQNEAVWVSEGKMEGMDDDAEDRMSYLTAMGADYLSCDSRLISDFEDTDGEGGAYTDNELEEPAEEPLVSSITRSSEPVQHEENIRKSSPEPRAQMRRAASRDQLRDASPPPAFKPEPPKARSQNREDSFDYSKSNLPATAGSEIPGGSTKGYPPPIAAKPAFGRPILKPSTPVPMPESEEVGESTEEQEDAPRSVLGRVKIFEKMDHKAKLQRMQELQEAQNARIEIAQKHPDIYAVPIKAPKPDAGLPPHMSSRPPEPQKAPSRLYQDTRGSYGSDPEEEEYRQQLAAHSKRGYYSQPSRYRDTEL</sequence>
<evidence type="ECO:0000250" key="1"/>
<evidence type="ECO:0000250" key="2">
    <source>
        <dbReference type="UniProtKB" id="Q95168"/>
    </source>
</evidence>
<evidence type="ECO:0000250" key="3">
    <source>
        <dbReference type="UniProtKB" id="Q9UDY2"/>
    </source>
</evidence>
<evidence type="ECO:0000255" key="4">
    <source>
        <dbReference type="PROSITE-ProRule" id="PRU00100"/>
    </source>
</evidence>
<evidence type="ECO:0000255" key="5">
    <source>
        <dbReference type="PROSITE-ProRule" id="PRU00143"/>
    </source>
</evidence>
<evidence type="ECO:0000255" key="6">
    <source>
        <dbReference type="PROSITE-ProRule" id="PRU00192"/>
    </source>
</evidence>
<evidence type="ECO:0000256" key="7">
    <source>
        <dbReference type="SAM" id="MobiDB-lite"/>
    </source>
</evidence>
<evidence type="ECO:0000269" key="8">
    <source>
    </source>
</evidence>
<evidence type="ECO:0000269" key="9">
    <source>
    </source>
</evidence>
<evidence type="ECO:0000269" key="10">
    <source>
    </source>
</evidence>
<evidence type="ECO:0000269" key="11">
    <source>
    </source>
</evidence>
<evidence type="ECO:0000303" key="12">
    <source>
    </source>
</evidence>
<evidence type="ECO:0000305" key="13"/>
<evidence type="ECO:0000312" key="14">
    <source>
        <dbReference type="MGI" id="MGI:1341872"/>
    </source>
</evidence>
<evidence type="ECO:0007744" key="15">
    <source>
    </source>
</evidence>
<evidence type="ECO:0007744" key="16">
    <source>
    </source>
</evidence>
<evidence type="ECO:0007744" key="17">
    <source>
    </source>
</evidence>
<evidence type="ECO:0007744" key="18">
    <source>
    </source>
</evidence>
<evidence type="ECO:0007744" key="19">
    <source>
    </source>
</evidence>
<evidence type="ECO:0007744" key="20">
    <source>
    </source>
</evidence>
<evidence type="ECO:0007744" key="21">
    <source>
    </source>
</evidence>
<evidence type="ECO:0007829" key="22">
    <source>
        <dbReference type="PDB" id="2CSJ"/>
    </source>
</evidence>
<reference key="1">
    <citation type="journal article" date="1999" name="J. Biol. Chem.">
        <title>Characterization of ZO-2 as a MAGUK family member associated with tight as well as adherens junctions with a binding affinity to occludin and alpha catenin.</title>
        <authorList>
            <person name="Itoh M."/>
            <person name="Morita K."/>
            <person name="Tsukita S."/>
        </authorList>
    </citation>
    <scope>NUCLEOTIDE SEQUENCE [MRNA]</scope>
    <scope>FUNCTION</scope>
    <scope>INTERACTION WITH TJP1; OCLN AND CTNNA1</scope>
    <scope>SUBCELLULAR LOCATION</scope>
    <source>
        <strain>C57BL/6 X CBA</strain>
    </source>
</reference>
<reference key="2">
    <citation type="journal article" date="2004" name="Genome Res.">
        <title>The status, quality, and expansion of the NIH full-length cDNA project: the Mammalian Gene Collection (MGC).</title>
        <authorList>
            <consortium name="The MGC Project Team"/>
        </authorList>
    </citation>
    <scope>NUCLEOTIDE SEQUENCE [LARGE SCALE MRNA]</scope>
    <source>
        <strain>129</strain>
        <tissue>Mammary gland</tissue>
    </source>
</reference>
<reference key="3">
    <citation type="journal article" date="2003" name="J. Biol. Chem.">
        <title>The tight junction protein ZO-2 localizes to the nucleus and interacts with the heterogeneous nuclear ribonucleoprotein scaffold attachment factor-B.</title>
        <authorList>
            <person name="Traweger A."/>
            <person name="Fuchs R."/>
            <person name="Krizbai I.A."/>
            <person name="Weiger T.M."/>
            <person name="Bauer H.-C."/>
            <person name="Bauer H."/>
        </authorList>
    </citation>
    <scope>SUBCELLULAR LOCATION</scope>
    <scope>INTERACTION WITH SAFB</scope>
</reference>
<reference key="4">
    <citation type="journal article" date="2005" name="Nat. Biotechnol.">
        <title>Immunoaffinity profiling of tyrosine phosphorylation in cancer cells.</title>
        <authorList>
            <person name="Rush J."/>
            <person name="Moritz A."/>
            <person name="Lee K.A."/>
            <person name="Guo A."/>
            <person name="Goss V.L."/>
            <person name="Spek E.J."/>
            <person name="Zhang H."/>
            <person name="Zha X.-M."/>
            <person name="Polakiewicz R.D."/>
            <person name="Comb M.J."/>
        </authorList>
    </citation>
    <scope>PHOSPHORYLATION [LARGE SCALE ANALYSIS] AT TYR-554</scope>
    <scope>IDENTIFICATION BY MASS SPECTROMETRY [LARGE SCALE ANALYSIS]</scope>
</reference>
<reference key="5">
    <citation type="journal article" date="2006" name="Mol. Cell. Proteomics">
        <title>Comprehensive identification of phosphorylation sites in postsynaptic density preparations.</title>
        <authorList>
            <person name="Trinidad J.C."/>
            <person name="Specht C.G."/>
            <person name="Thalhammer A."/>
            <person name="Schoepfer R."/>
            <person name="Burlingame A.L."/>
        </authorList>
    </citation>
    <scope>PHOSPHORYLATION [LARGE SCALE ANALYSIS] AT SER-107</scope>
    <scope>IDENTIFICATION BY MASS SPECTROMETRY [LARGE SCALE ANALYSIS]</scope>
    <source>
        <tissue>Brain</tissue>
    </source>
</reference>
<reference key="6">
    <citation type="journal article" date="2007" name="Proc. Natl. Acad. Sci. U.S.A.">
        <title>Large-scale phosphorylation analysis of mouse liver.</title>
        <authorList>
            <person name="Villen J."/>
            <person name="Beausoleil S.A."/>
            <person name="Gerber S.A."/>
            <person name="Gygi S.P."/>
        </authorList>
    </citation>
    <scope>PHOSPHORYLATION [LARGE SCALE ANALYSIS] AT SER-1136</scope>
    <scope>IDENTIFICATION BY MASS SPECTROMETRY [LARGE SCALE ANALYSIS]</scope>
    <source>
        <tissue>Liver</tissue>
    </source>
</reference>
<reference key="7">
    <citation type="journal article" date="2008" name="J. Proteome Res.">
        <title>Specific phosphopeptide enrichment with immobilized titanium ion affinity chromatography adsorbent for phosphoproteome analysis.</title>
        <authorList>
            <person name="Zhou H."/>
            <person name="Ye M."/>
            <person name="Dong J."/>
            <person name="Han G."/>
            <person name="Jiang X."/>
            <person name="Wu R."/>
            <person name="Zou H."/>
        </authorList>
    </citation>
    <scope>PHOSPHORYLATION [LARGE SCALE ANALYSIS] AT SER-107</scope>
    <scope>IDENTIFICATION BY MASS SPECTROMETRY [LARGE SCALE ANALYSIS]</scope>
    <source>
        <tissue>Liver</tissue>
    </source>
</reference>
<reference key="8">
    <citation type="journal article" date="2009" name="Immunity">
        <title>The phagosomal proteome in interferon-gamma-activated macrophages.</title>
        <authorList>
            <person name="Trost M."/>
            <person name="English L."/>
            <person name="Lemieux S."/>
            <person name="Courcelles M."/>
            <person name="Desjardins M."/>
            <person name="Thibault P."/>
        </authorList>
    </citation>
    <scope>PHOSPHORYLATION [LARGE SCALE ANALYSIS] AT SER-107</scope>
    <scope>IDENTIFICATION BY MASS SPECTROMETRY [LARGE SCALE ANALYSIS]</scope>
</reference>
<reference key="9">
    <citation type="journal article" date="2009" name="Mol. Cell. Proteomics">
        <title>Large scale localization of protein phosphorylation by use of electron capture dissociation mass spectrometry.</title>
        <authorList>
            <person name="Sweet S.M."/>
            <person name="Bailey C.M."/>
            <person name="Cunningham D.L."/>
            <person name="Heath J.K."/>
            <person name="Cooper H.J."/>
        </authorList>
    </citation>
    <scope>PHOSPHORYLATION [LARGE SCALE ANALYSIS] AT SER-968 AND TYR-1095</scope>
    <scope>IDENTIFICATION BY MASS SPECTROMETRY [LARGE SCALE ANALYSIS]</scope>
    <source>
        <tissue>Embryonic fibroblast</tissue>
    </source>
</reference>
<reference key="10">
    <citation type="journal article" date="2010" name="Cell">
        <title>A tissue-specific atlas of mouse protein phosphorylation and expression.</title>
        <authorList>
            <person name="Huttlin E.L."/>
            <person name="Jedrychowski M.P."/>
            <person name="Elias J.E."/>
            <person name="Goswami T."/>
            <person name="Rad R."/>
            <person name="Beausoleil S.A."/>
            <person name="Villen J."/>
            <person name="Haas W."/>
            <person name="Sowa M.E."/>
            <person name="Gygi S.P."/>
        </authorList>
    </citation>
    <scope>PHOSPHORYLATION [LARGE SCALE ANALYSIS] AT SER-107; SER-140; SER-239; SER-378; SER-380; SER-479; SER-684; SER-884; THR-887; SER-895; SER-988 AND SER-1136</scope>
    <scope>IDENTIFICATION BY MASS SPECTROMETRY [LARGE SCALE ANALYSIS]</scope>
    <source>
        <tissue>Brain</tissue>
        <tissue>Brown adipose tissue</tissue>
        <tissue>Heart</tissue>
        <tissue>Kidney</tissue>
        <tissue>Liver</tissue>
        <tissue>Lung</tissue>
        <tissue>Pancreas</tissue>
        <tissue>Spleen</tissue>
        <tissue>Testis</tissue>
    </source>
</reference>
<reference key="11">
    <citation type="journal article" date="2012" name="J. Bone Miner. Res.">
        <title>Claudin 18 is a novel negative regulator of bone resorption and osteoclast differentiation.</title>
        <authorList>
            <person name="Linares G.R."/>
            <person name="Brommage R."/>
            <person name="Powell D.R."/>
            <person name="Xing W."/>
            <person name="Chen S.T."/>
            <person name="Alshbool F.Z."/>
            <person name="Lau K.H."/>
            <person name="Wergedal J.E."/>
            <person name="Mohan S."/>
        </authorList>
    </citation>
    <scope>FUNCTION</scope>
    <scope>INTERACTION WITH CLDN18</scope>
    <scope>SUBCELLULAR LOCATION</scope>
</reference>
<reference key="12">
    <citation type="journal article" date="2015" name="J. Neurosci.">
        <title>Progressive hearing loss in mice carrying a mutation in usp53.</title>
        <authorList>
            <person name="Kazmierczak M."/>
            <person name="Harris S.L."/>
            <person name="Kazmierczak P."/>
            <person name="Shah P."/>
            <person name="Starovoytov V."/>
            <person name="Ohlemiller K.K."/>
            <person name="Schwander M."/>
        </authorList>
    </citation>
    <scope>INTERACTION WITH USP53</scope>
    <scope>SUBCELLULAR LOCATION</scope>
</reference>
<reference key="13">
    <citation type="submission" date="2005-05" db="PDB data bank">
        <title>Solution structure of N-terminal PDZ domain from mouse TJP2.</title>
        <authorList>
            <consortium name="RIKEN structural genomics initiative (RSGI)"/>
        </authorList>
    </citation>
    <scope>STRUCTURE BY NMR OF 1-106</scope>
</reference>
<gene>
    <name evidence="14" type="primary">Tjp2</name>
    <name evidence="12" type="synonym">Zo2</name>
</gene>
<name>ZO2_MOUSE</name>
<accession>Q9Z0U1</accession>
<accession>Q8K210</accession>
<proteinExistence type="evidence at protein level"/>